<feature type="chain" id="PRO_1000052531" description="Large ribosomal subunit protein uL22">
    <location>
        <begin position="1"/>
        <end position="167"/>
    </location>
</feature>
<feature type="region of interest" description="Disordered" evidence="2">
    <location>
        <begin position="120"/>
        <end position="167"/>
    </location>
</feature>
<feature type="compositionally biased region" description="Basic residues" evidence="2">
    <location>
        <begin position="134"/>
        <end position="167"/>
    </location>
</feature>
<protein>
    <recommendedName>
        <fullName evidence="1">Large ribosomal subunit protein uL22</fullName>
    </recommendedName>
    <alternativeName>
        <fullName evidence="3">50S ribosomal protein L22</fullName>
    </alternativeName>
</protein>
<comment type="function">
    <text evidence="1">This protein binds specifically to 23S rRNA; its binding is stimulated by other ribosomal proteins, e.g. L4, L17, and L20. It is important during the early stages of 50S assembly. It makes multiple contacts with different domains of the 23S rRNA in the assembled 50S subunit and ribosome (By similarity).</text>
</comment>
<comment type="function">
    <text evidence="1">The globular domain of the protein is located near the polypeptide exit tunnel on the outside of the subunit, while an extended beta-hairpin is found that lines the wall of the exit tunnel in the center of the 70S ribosome.</text>
</comment>
<comment type="subunit">
    <text evidence="1">Part of the 50S ribosomal subunit.</text>
</comment>
<comment type="similarity">
    <text evidence="1">Belongs to the universal ribosomal protein uL22 family.</text>
</comment>
<gene>
    <name evidence="1" type="primary">rplV</name>
    <name type="ordered locus">Acid345_1231</name>
</gene>
<proteinExistence type="inferred from homology"/>
<evidence type="ECO:0000255" key="1">
    <source>
        <dbReference type="HAMAP-Rule" id="MF_01331"/>
    </source>
</evidence>
<evidence type="ECO:0000256" key="2">
    <source>
        <dbReference type="SAM" id="MobiDB-lite"/>
    </source>
</evidence>
<evidence type="ECO:0000305" key="3"/>
<keyword id="KW-1185">Reference proteome</keyword>
<keyword id="KW-0687">Ribonucleoprotein</keyword>
<keyword id="KW-0689">Ribosomal protein</keyword>
<keyword id="KW-0694">RNA-binding</keyword>
<keyword id="KW-0699">rRNA-binding</keyword>
<organism>
    <name type="scientific">Koribacter versatilis (strain Ellin345)</name>
    <dbReference type="NCBI Taxonomy" id="204669"/>
    <lineage>
        <taxon>Bacteria</taxon>
        <taxon>Pseudomonadati</taxon>
        <taxon>Acidobacteriota</taxon>
        <taxon>Terriglobia</taxon>
        <taxon>Terriglobales</taxon>
        <taxon>Candidatus Korobacteraceae</taxon>
        <taxon>Candidatus Korobacter</taxon>
    </lineage>
</organism>
<dbReference type="EMBL" id="CP000360">
    <property type="protein sequence ID" value="ABF40233.1"/>
    <property type="molecule type" value="Genomic_DNA"/>
</dbReference>
<dbReference type="RefSeq" id="WP_011522035.1">
    <property type="nucleotide sequence ID" value="NC_008009.1"/>
</dbReference>
<dbReference type="SMR" id="Q1ISB7"/>
<dbReference type="STRING" id="204669.Acid345_1231"/>
<dbReference type="EnsemblBacteria" id="ABF40233">
    <property type="protein sequence ID" value="ABF40233"/>
    <property type="gene ID" value="Acid345_1231"/>
</dbReference>
<dbReference type="KEGG" id="aba:Acid345_1231"/>
<dbReference type="eggNOG" id="COG0091">
    <property type="taxonomic scope" value="Bacteria"/>
</dbReference>
<dbReference type="HOGENOM" id="CLU_083987_3_3_0"/>
<dbReference type="OrthoDB" id="9805969at2"/>
<dbReference type="Proteomes" id="UP000002432">
    <property type="component" value="Chromosome"/>
</dbReference>
<dbReference type="GO" id="GO:0022625">
    <property type="term" value="C:cytosolic large ribosomal subunit"/>
    <property type="evidence" value="ECO:0007669"/>
    <property type="project" value="TreeGrafter"/>
</dbReference>
<dbReference type="GO" id="GO:0019843">
    <property type="term" value="F:rRNA binding"/>
    <property type="evidence" value="ECO:0007669"/>
    <property type="project" value="UniProtKB-UniRule"/>
</dbReference>
<dbReference type="GO" id="GO:0003735">
    <property type="term" value="F:structural constituent of ribosome"/>
    <property type="evidence" value="ECO:0007669"/>
    <property type="project" value="InterPro"/>
</dbReference>
<dbReference type="GO" id="GO:0006412">
    <property type="term" value="P:translation"/>
    <property type="evidence" value="ECO:0007669"/>
    <property type="project" value="UniProtKB-UniRule"/>
</dbReference>
<dbReference type="CDD" id="cd00336">
    <property type="entry name" value="Ribosomal_L22"/>
    <property type="match status" value="1"/>
</dbReference>
<dbReference type="Gene3D" id="3.90.470.10">
    <property type="entry name" value="Ribosomal protein L22/L17"/>
    <property type="match status" value="1"/>
</dbReference>
<dbReference type="HAMAP" id="MF_01331_B">
    <property type="entry name" value="Ribosomal_uL22_B"/>
    <property type="match status" value="1"/>
</dbReference>
<dbReference type="InterPro" id="IPR001063">
    <property type="entry name" value="Ribosomal_uL22"/>
</dbReference>
<dbReference type="InterPro" id="IPR005727">
    <property type="entry name" value="Ribosomal_uL22_bac/chlpt-type"/>
</dbReference>
<dbReference type="InterPro" id="IPR047867">
    <property type="entry name" value="Ribosomal_uL22_bac/org-type"/>
</dbReference>
<dbReference type="InterPro" id="IPR036394">
    <property type="entry name" value="Ribosomal_uL22_sf"/>
</dbReference>
<dbReference type="NCBIfam" id="TIGR01044">
    <property type="entry name" value="rplV_bact"/>
    <property type="match status" value="1"/>
</dbReference>
<dbReference type="PANTHER" id="PTHR13501">
    <property type="entry name" value="CHLOROPLAST 50S RIBOSOMAL PROTEIN L22-RELATED"/>
    <property type="match status" value="1"/>
</dbReference>
<dbReference type="PANTHER" id="PTHR13501:SF8">
    <property type="entry name" value="LARGE RIBOSOMAL SUBUNIT PROTEIN UL22M"/>
    <property type="match status" value="1"/>
</dbReference>
<dbReference type="Pfam" id="PF00237">
    <property type="entry name" value="Ribosomal_L22"/>
    <property type="match status" value="1"/>
</dbReference>
<dbReference type="SUPFAM" id="SSF54843">
    <property type="entry name" value="Ribosomal protein L22"/>
    <property type="match status" value="1"/>
</dbReference>
<sequence length="167" mass="18317">MEFTAKANFVRVSPQKARLVLDLIKGQRVEDALNTLLFTKKGIAPAIYKLVHSAMDNANYLSNEKGLDLDLDRLYVKKAIANDGPRMKRIRPAPMGRAFRYQRRISHIEISLAEKPGFQGSTATTVEDEAPKAKGAKGAKAKKAPAKKAAAKKAPAKKFAGKKTAKR</sequence>
<name>RL22_KORVE</name>
<accession>Q1ISB7</accession>
<reference key="1">
    <citation type="journal article" date="2009" name="Appl. Environ. Microbiol.">
        <title>Three genomes from the phylum Acidobacteria provide insight into the lifestyles of these microorganisms in soils.</title>
        <authorList>
            <person name="Ward N.L."/>
            <person name="Challacombe J.F."/>
            <person name="Janssen P.H."/>
            <person name="Henrissat B."/>
            <person name="Coutinho P.M."/>
            <person name="Wu M."/>
            <person name="Xie G."/>
            <person name="Haft D.H."/>
            <person name="Sait M."/>
            <person name="Badger J."/>
            <person name="Barabote R.D."/>
            <person name="Bradley B."/>
            <person name="Brettin T.S."/>
            <person name="Brinkac L.M."/>
            <person name="Bruce D."/>
            <person name="Creasy T."/>
            <person name="Daugherty S.C."/>
            <person name="Davidsen T.M."/>
            <person name="DeBoy R.T."/>
            <person name="Detter J.C."/>
            <person name="Dodson R.J."/>
            <person name="Durkin A.S."/>
            <person name="Ganapathy A."/>
            <person name="Gwinn-Giglio M."/>
            <person name="Han C.S."/>
            <person name="Khouri H."/>
            <person name="Kiss H."/>
            <person name="Kothari S.P."/>
            <person name="Madupu R."/>
            <person name="Nelson K.E."/>
            <person name="Nelson W.C."/>
            <person name="Paulsen I."/>
            <person name="Penn K."/>
            <person name="Ren Q."/>
            <person name="Rosovitz M.J."/>
            <person name="Selengut J.D."/>
            <person name="Shrivastava S."/>
            <person name="Sullivan S.A."/>
            <person name="Tapia R."/>
            <person name="Thompson L.S."/>
            <person name="Watkins K.L."/>
            <person name="Yang Q."/>
            <person name="Yu C."/>
            <person name="Zafar N."/>
            <person name="Zhou L."/>
            <person name="Kuske C.R."/>
        </authorList>
    </citation>
    <scope>NUCLEOTIDE SEQUENCE [LARGE SCALE GENOMIC DNA]</scope>
    <source>
        <strain>Ellin345</strain>
    </source>
</reference>